<reference key="1">
    <citation type="journal article" date="2000" name="Nature">
        <title>The genome sequence of the food-borne pathogen Campylobacter jejuni reveals hypervariable sequences.</title>
        <authorList>
            <person name="Parkhill J."/>
            <person name="Wren B.W."/>
            <person name="Mungall K.L."/>
            <person name="Ketley J.M."/>
            <person name="Churcher C.M."/>
            <person name="Basham D."/>
            <person name="Chillingworth T."/>
            <person name="Davies R.M."/>
            <person name="Feltwell T."/>
            <person name="Holroyd S."/>
            <person name="Jagels K."/>
            <person name="Karlyshev A.V."/>
            <person name="Moule S."/>
            <person name="Pallen M.J."/>
            <person name="Penn C.W."/>
            <person name="Quail M.A."/>
            <person name="Rajandream M.A."/>
            <person name="Rutherford K.M."/>
            <person name="van Vliet A.H.M."/>
            <person name="Whitehead S."/>
            <person name="Barrell B.G."/>
        </authorList>
    </citation>
    <scope>NUCLEOTIDE SEQUENCE [LARGE SCALE GENOMIC DNA]</scope>
    <source>
        <strain>ATCC 700819 / NCTC 11168</strain>
    </source>
</reference>
<name>RS8_CAMJE</name>
<evidence type="ECO:0000255" key="1">
    <source>
        <dbReference type="HAMAP-Rule" id="MF_01302"/>
    </source>
</evidence>
<evidence type="ECO:0000305" key="2"/>
<proteinExistence type="inferred from homology"/>
<comment type="function">
    <text evidence="1">One of the primary rRNA binding proteins, it binds directly to 16S rRNA central domain where it helps coordinate assembly of the platform of the 30S subunit.</text>
</comment>
<comment type="subunit">
    <text evidence="1">Part of the 30S ribosomal subunit. Contacts proteins S5 and S12.</text>
</comment>
<comment type="similarity">
    <text evidence="1">Belongs to the universal ribosomal protein uS8 family.</text>
</comment>
<dbReference type="EMBL" id="AL111168">
    <property type="protein sequence ID" value="CAL35787.1"/>
    <property type="molecule type" value="Genomic_DNA"/>
</dbReference>
<dbReference type="PIR" id="A81267">
    <property type="entry name" value="A81267"/>
</dbReference>
<dbReference type="RefSeq" id="WP_002851353.1">
    <property type="nucleotide sequence ID" value="NZ_SZUC01000002.1"/>
</dbReference>
<dbReference type="RefSeq" id="YP_002345059.1">
    <property type="nucleotide sequence ID" value="NC_002163.1"/>
</dbReference>
<dbReference type="SMR" id="Q9PLY5"/>
<dbReference type="IntAct" id="Q9PLY5">
    <property type="interactions" value="12"/>
</dbReference>
<dbReference type="STRING" id="192222.Cj1693c"/>
<dbReference type="PaxDb" id="192222-Cj1693c"/>
<dbReference type="EnsemblBacteria" id="CAL35787">
    <property type="protein sequence ID" value="CAL35787"/>
    <property type="gene ID" value="Cj1693c"/>
</dbReference>
<dbReference type="GeneID" id="905967"/>
<dbReference type="KEGG" id="cje:Cj1693c"/>
<dbReference type="PATRIC" id="fig|192222.6.peg.1667"/>
<dbReference type="eggNOG" id="COG0096">
    <property type="taxonomic scope" value="Bacteria"/>
</dbReference>
<dbReference type="HOGENOM" id="CLU_098428_0_2_7"/>
<dbReference type="OrthoDB" id="9802617at2"/>
<dbReference type="Proteomes" id="UP000000799">
    <property type="component" value="Chromosome"/>
</dbReference>
<dbReference type="GO" id="GO:1990904">
    <property type="term" value="C:ribonucleoprotein complex"/>
    <property type="evidence" value="ECO:0007669"/>
    <property type="project" value="UniProtKB-KW"/>
</dbReference>
<dbReference type="GO" id="GO:0005840">
    <property type="term" value="C:ribosome"/>
    <property type="evidence" value="ECO:0007669"/>
    <property type="project" value="UniProtKB-KW"/>
</dbReference>
<dbReference type="GO" id="GO:0019843">
    <property type="term" value="F:rRNA binding"/>
    <property type="evidence" value="ECO:0007669"/>
    <property type="project" value="UniProtKB-UniRule"/>
</dbReference>
<dbReference type="GO" id="GO:0003735">
    <property type="term" value="F:structural constituent of ribosome"/>
    <property type="evidence" value="ECO:0007669"/>
    <property type="project" value="InterPro"/>
</dbReference>
<dbReference type="GO" id="GO:0006412">
    <property type="term" value="P:translation"/>
    <property type="evidence" value="ECO:0007669"/>
    <property type="project" value="UniProtKB-UniRule"/>
</dbReference>
<dbReference type="FunFam" id="3.30.1370.30:FF:000002">
    <property type="entry name" value="30S ribosomal protein S8"/>
    <property type="match status" value="1"/>
</dbReference>
<dbReference type="FunFam" id="3.30.1490.10:FF:000001">
    <property type="entry name" value="30S ribosomal protein S8"/>
    <property type="match status" value="1"/>
</dbReference>
<dbReference type="Gene3D" id="3.30.1370.30">
    <property type="match status" value="1"/>
</dbReference>
<dbReference type="Gene3D" id="3.30.1490.10">
    <property type="match status" value="1"/>
</dbReference>
<dbReference type="HAMAP" id="MF_01302_B">
    <property type="entry name" value="Ribosomal_uS8_B"/>
    <property type="match status" value="1"/>
</dbReference>
<dbReference type="InterPro" id="IPR000630">
    <property type="entry name" value="Ribosomal_uS8"/>
</dbReference>
<dbReference type="InterPro" id="IPR047863">
    <property type="entry name" value="Ribosomal_uS8_CS"/>
</dbReference>
<dbReference type="InterPro" id="IPR035987">
    <property type="entry name" value="Ribosomal_uS8_sf"/>
</dbReference>
<dbReference type="NCBIfam" id="NF001109">
    <property type="entry name" value="PRK00136.1"/>
    <property type="match status" value="1"/>
</dbReference>
<dbReference type="PANTHER" id="PTHR11758">
    <property type="entry name" value="40S RIBOSOMAL PROTEIN S15A"/>
    <property type="match status" value="1"/>
</dbReference>
<dbReference type="Pfam" id="PF00410">
    <property type="entry name" value="Ribosomal_S8"/>
    <property type="match status" value="1"/>
</dbReference>
<dbReference type="SUPFAM" id="SSF56047">
    <property type="entry name" value="Ribosomal protein S8"/>
    <property type="match status" value="1"/>
</dbReference>
<dbReference type="PROSITE" id="PS00053">
    <property type="entry name" value="RIBOSOMAL_S8"/>
    <property type="match status" value="1"/>
</dbReference>
<keyword id="KW-1185">Reference proteome</keyword>
<keyword id="KW-0687">Ribonucleoprotein</keyword>
<keyword id="KW-0689">Ribosomal protein</keyword>
<keyword id="KW-0694">RNA-binding</keyword>
<keyword id="KW-0699">rRNA-binding</keyword>
<accession>Q9PLY5</accession>
<accession>Q0P7T8</accession>
<organism>
    <name type="scientific">Campylobacter jejuni subsp. jejuni serotype O:2 (strain ATCC 700819 / NCTC 11168)</name>
    <dbReference type="NCBI Taxonomy" id="192222"/>
    <lineage>
        <taxon>Bacteria</taxon>
        <taxon>Pseudomonadati</taxon>
        <taxon>Campylobacterota</taxon>
        <taxon>Epsilonproteobacteria</taxon>
        <taxon>Campylobacterales</taxon>
        <taxon>Campylobacteraceae</taxon>
        <taxon>Campylobacter</taxon>
    </lineage>
</organism>
<sequence>MINDIISDSLTRIRNAGMRKLETTKLLHSKVVEALVGIFQAKGYIESFNVIEEDKKKFINVVLKYDEKGKSVINELKRISKPGRRVYKGKDEIKRFKNGYGTIVVSTSHGVLANDEAYKAGVGGEILCTIW</sequence>
<feature type="chain" id="PRO_0000126386" description="Small ribosomal subunit protein uS8">
    <location>
        <begin position="1"/>
        <end position="131"/>
    </location>
</feature>
<gene>
    <name evidence="1" type="primary">rpsH</name>
    <name type="ordered locus">Cj1693c</name>
</gene>
<protein>
    <recommendedName>
        <fullName evidence="1">Small ribosomal subunit protein uS8</fullName>
    </recommendedName>
    <alternativeName>
        <fullName evidence="2">30S ribosomal protein S8</fullName>
    </alternativeName>
</protein>